<feature type="chain" id="PRO_0000132241" description="DELLA protein GAIP">
    <location>
        <begin position="1"/>
        <end position="579"/>
    </location>
</feature>
<feature type="domain" description="GRAS" evidence="2">
    <location>
        <begin position="202"/>
        <end position="570"/>
    </location>
</feature>
<feature type="region of interest" description="Disordered" evidence="3">
    <location>
        <begin position="1"/>
        <end position="25"/>
    </location>
</feature>
<feature type="region of interest" description="Leucine repeat I (LRI)" evidence="2">
    <location>
        <begin position="209"/>
        <end position="263"/>
    </location>
</feature>
<feature type="region of interest" description="VHIID" evidence="2">
    <location>
        <begin position="281"/>
        <end position="346"/>
    </location>
</feature>
<feature type="region of interest" description="Leucine repeat II (LRII)" evidence="2">
    <location>
        <begin position="360"/>
        <end position="392"/>
    </location>
</feature>
<feature type="region of interest" description="PFYRE" evidence="2">
    <location>
        <begin position="404"/>
        <end position="491"/>
    </location>
</feature>
<feature type="region of interest" description="SAW" evidence="2">
    <location>
        <begin position="494"/>
        <end position="570"/>
    </location>
</feature>
<feature type="short sequence motif" description="DELLA motif">
    <location>
        <begin position="46"/>
        <end position="50"/>
    </location>
</feature>
<feature type="short sequence motif" description="VHIID" evidence="2">
    <location>
        <begin position="312"/>
        <end position="316"/>
    </location>
</feature>
<feature type="short sequence motif" description="LXXLL motif" evidence="2">
    <location>
        <begin position="412"/>
        <end position="416"/>
    </location>
</feature>
<evidence type="ECO:0000250" key="1"/>
<evidence type="ECO:0000255" key="2">
    <source>
        <dbReference type="PROSITE-ProRule" id="PRU01191"/>
    </source>
</evidence>
<evidence type="ECO:0000256" key="3">
    <source>
        <dbReference type="SAM" id="MobiDB-lite"/>
    </source>
</evidence>
<evidence type="ECO:0000305" key="4"/>
<keyword id="KW-0939">Gibberellin signaling pathway</keyword>
<keyword id="KW-0539">Nucleus</keyword>
<keyword id="KW-0597">Phosphoprotein</keyword>
<keyword id="KW-1185">Reference proteome</keyword>
<keyword id="KW-0678">Repressor</keyword>
<keyword id="KW-0804">Transcription</keyword>
<keyword id="KW-0805">Transcription regulation</keyword>
<keyword id="KW-0832">Ubl conjugation</keyword>
<protein>
    <recommendedName>
        <fullName>DELLA protein GAIP</fullName>
    </recommendedName>
    <alternativeName>
        <fullName>CmGAIP</fullName>
        <shortName>GAIP</shortName>
    </alternativeName>
    <alternativeName>
        <fullName>Gibberellic acid-insensitive phloem protein</fullName>
    </alternativeName>
</protein>
<organism>
    <name type="scientific">Cucurbita maxima</name>
    <name type="common">Pumpkin</name>
    <name type="synonym">Winter squash</name>
    <dbReference type="NCBI Taxonomy" id="3661"/>
    <lineage>
        <taxon>Eukaryota</taxon>
        <taxon>Viridiplantae</taxon>
        <taxon>Streptophyta</taxon>
        <taxon>Embryophyta</taxon>
        <taxon>Tracheophyta</taxon>
        <taxon>Spermatophyta</taxon>
        <taxon>Magnoliopsida</taxon>
        <taxon>eudicotyledons</taxon>
        <taxon>Gunneridae</taxon>
        <taxon>Pentapetalae</taxon>
        <taxon>rosids</taxon>
        <taxon>fabids</taxon>
        <taxon>Cucurbitales</taxon>
        <taxon>Cucurbitaceae</taxon>
        <taxon>Cucurbiteae</taxon>
        <taxon>Cucurbita</taxon>
    </lineage>
</organism>
<name>GAIP_CUCMA</name>
<sequence length="579" mass="64442">MKREHHYLHPRPEPPSVATGSNRESYLNTGKAKLWEEEVQLDGGMDELLAVLGYKVKSSDMAEVAQKLEQLEEAMCQVQDTGLSHLAFDTVHYNPSDLSTWVESMLTELHPPPTSHLDDSSFLAPAESSTIANVDYEPQLQTSSRIFEESSSSDYDLKAITDSAIYSPRESKRLKASESDTDVFSTSAIGASNFATRPVVLVDSQENGIQLVHALMVCAEAVQQNNLNLAEALVKRIDYLAVSQAGAMRKVATFFAEALARRIYRLCPENPLDRSVLDMLQMHFYESCPYLKFAHFTANQAILEAFEGKKRVHVIDFSMNQGIQWPALIQALALRPSGPPTFRLTGIGPPAPDNSDYLQDVGWKLVKFAETLHVEFEYRGFVANSLADLDASMLELRPSEVESVVVNSVFELHQLLARPGAIEKVLSVVKQMKPEIVTVVEQEANHNGPVFVERFTESLHYYSTLFDSLECSPNSQDKMMSEMYLGKQICNVVACEGADRVERHETLTQWRTRLSSAGFDPIHLGSNAFKQASILLALFGSGEGYRVEENEGSLMLGWHTRPLIATSAWKPGNNPVVAH</sequence>
<proteinExistence type="evidence at transcript level"/>
<dbReference type="EMBL" id="AY326306">
    <property type="protein sequence ID" value="AAQ96164.1"/>
    <property type="molecule type" value="mRNA"/>
</dbReference>
<dbReference type="SMR" id="Q6EI06"/>
<dbReference type="Proteomes" id="UP000504608">
    <property type="component" value="Unplaced"/>
</dbReference>
<dbReference type="GO" id="GO:0005634">
    <property type="term" value="C:nucleus"/>
    <property type="evidence" value="ECO:0007669"/>
    <property type="project" value="UniProtKB-SubCell"/>
</dbReference>
<dbReference type="GO" id="GO:0009740">
    <property type="term" value="P:gibberellic acid mediated signaling pathway"/>
    <property type="evidence" value="ECO:0007669"/>
    <property type="project" value="UniProtKB-KW"/>
</dbReference>
<dbReference type="FunFam" id="1.10.10.1290:FF:000001">
    <property type="entry name" value="DELLA protein GAI"/>
    <property type="match status" value="1"/>
</dbReference>
<dbReference type="Gene3D" id="1.10.10.1290">
    <property type="entry name" value="Transcriptional regulator DELLA, N-terminal domain"/>
    <property type="match status" value="1"/>
</dbReference>
<dbReference type="InterPro" id="IPR038088">
    <property type="entry name" value="DELLA_N_sf"/>
</dbReference>
<dbReference type="InterPro" id="IPR021914">
    <property type="entry name" value="TF_DELLA_N"/>
</dbReference>
<dbReference type="InterPro" id="IPR005202">
    <property type="entry name" value="TF_GRAS"/>
</dbReference>
<dbReference type="PANTHER" id="PTHR31636">
    <property type="entry name" value="OSJNBA0084A10.13 PROTEIN-RELATED"/>
    <property type="match status" value="1"/>
</dbReference>
<dbReference type="Pfam" id="PF12041">
    <property type="entry name" value="DELLA"/>
    <property type="match status" value="1"/>
</dbReference>
<dbReference type="Pfam" id="PF03514">
    <property type="entry name" value="GRAS"/>
    <property type="match status" value="1"/>
</dbReference>
<dbReference type="SMART" id="SM01129">
    <property type="entry name" value="DELLA"/>
    <property type="match status" value="1"/>
</dbReference>
<dbReference type="PROSITE" id="PS50985">
    <property type="entry name" value="GRAS"/>
    <property type="match status" value="1"/>
</dbReference>
<gene>
    <name type="primary">GAIP</name>
</gene>
<accession>Q6EI06</accession>
<comment type="function">
    <text evidence="1">Probable transcriptional regulator that acts as a repressor of the gibberellin (GA) signaling pathway. Probably acts by participating in large multiprotein complexes that represses transcription of GA-inducible genes. Upon GA application, it is degraded by the proteasome, allowing the GA signaling pathway (By similarity).</text>
</comment>
<comment type="subcellular location">
    <subcellularLocation>
        <location evidence="1">Nucleus</location>
    </subcellularLocation>
</comment>
<comment type="domain">
    <text evidence="1">The DELLA motif is required for its GA-induced degradation.</text>
</comment>
<comment type="PTM">
    <text evidence="1">Phosphorylated.</text>
</comment>
<comment type="PTM">
    <text evidence="1">Ubiquitinated. Upon GA application it is ubiquitinated, leading to its subsequent degradation (By similarity).</text>
</comment>
<comment type="miscellaneous">
    <text>Its mRNA transcript may be transported over long distance in the phloem stream. Such trafficking may regulate leaf development.</text>
</comment>
<comment type="similarity">
    <text evidence="4">Belongs to the GRAS family. DELLA subfamily.</text>
</comment>
<reference key="1">
    <citation type="journal article" date="2005" name="Plant J.">
        <title>Phloem long-distance trafficking of GIBBERELLIC ACID-INSENSITIVE RNA regulates leaf development.</title>
        <authorList>
            <person name="Haywood V."/>
            <person name="Yu T.-S."/>
            <person name="Huang N.-C."/>
            <person name="Lucas W.J."/>
        </authorList>
    </citation>
    <scope>NUCLEOTIDE SEQUENCE [MRNA]</scope>
</reference>